<reference key="1">
    <citation type="journal article" date="1998" name="Science">
        <title>Genome sequence of the nematode C. elegans: a platform for investigating biology.</title>
        <authorList>
            <consortium name="The C. elegans sequencing consortium"/>
        </authorList>
    </citation>
    <scope>NUCLEOTIDE SEQUENCE [LARGE SCALE GENOMIC DNA]</scope>
    <source>
        <strain>Bristol N2</strain>
    </source>
</reference>
<reference key="2">
    <citation type="journal article" date="2003" name="Eur. J. Biochem.">
        <title>The astacin protein family in Caenorhabditis elegans.</title>
        <authorList>
            <person name="Moehrlen F."/>
            <person name="Hutter H."/>
            <person name="Zwilling R."/>
        </authorList>
    </citation>
    <scope>NUCLEOTIDE SEQUENCE [MRNA] OF 208-260</scope>
    <scope>NOMENCLATURE</scope>
    <source>
        <strain>Bristol N2</strain>
    </source>
</reference>
<reference key="3">
    <citation type="journal article" date="2010" name="BMC Dev. Biol.">
        <title>Characterization of the astacin family of metalloproteases in C. elegans.</title>
        <authorList>
            <person name="Park J.O."/>
            <person name="Pan J."/>
            <person name="Moehrlen F."/>
            <person name="Schupp M.O."/>
            <person name="Johnsen R."/>
            <person name="Baillie D.L."/>
            <person name="Zapf R."/>
            <person name="Moerman D.G."/>
            <person name="Hutter H."/>
        </authorList>
    </citation>
    <scope>TISSUE SPECIFICITY</scope>
</reference>
<keyword id="KW-1015">Disulfide bond</keyword>
<keyword id="KW-0245">EGF-like domain</keyword>
<keyword id="KW-0325">Glycoprotein</keyword>
<keyword id="KW-0378">Hydrolase</keyword>
<keyword id="KW-0479">Metal-binding</keyword>
<keyword id="KW-0482">Metalloprotease</keyword>
<keyword id="KW-0645">Protease</keyword>
<keyword id="KW-1185">Reference proteome</keyword>
<keyword id="KW-0964">Secreted</keyword>
<keyword id="KW-0732">Signal</keyword>
<keyword id="KW-0862">Zinc</keyword>
<keyword id="KW-0865">Zymogen</keyword>
<comment type="function">
    <text evidence="3">Metalloprotease.</text>
</comment>
<comment type="cofactor">
    <cofactor evidence="5">
        <name>Zn(2+)</name>
        <dbReference type="ChEBI" id="CHEBI:29105"/>
    </cofactor>
    <text evidence="5">Binds 1 zinc ion per subunit.</text>
</comment>
<comment type="subcellular location">
    <subcellularLocation>
        <location evidence="7">Secreted</location>
    </subcellularLocation>
</comment>
<comment type="tissue specificity">
    <text evidence="6">Expressed in pharyngeal muscles, pharyngeal-intestinal valve, rectal gland cells and arcade cells.</text>
</comment>
<feature type="signal peptide" evidence="4">
    <location>
        <begin position="1"/>
        <end position="20"/>
    </location>
</feature>
<feature type="propeptide" id="PRO_0000442672" evidence="7">
    <location>
        <begin position="21"/>
        <end status="unknown"/>
    </location>
</feature>
<feature type="chain" id="PRO_0000028929" description="Zinc metalloproteinase nas-25">
    <location>
        <begin status="unknown"/>
        <end position="399"/>
    </location>
</feature>
<feature type="domain" description="Peptidase M12A" evidence="5">
    <location>
        <begin position="41"/>
        <end position="237"/>
    </location>
</feature>
<feature type="domain" description="EGF-like">
    <location>
        <begin position="232"/>
        <end position="275"/>
    </location>
</feature>
<feature type="active site" evidence="5">
    <location>
        <position position="135"/>
    </location>
</feature>
<feature type="binding site" evidence="5">
    <location>
        <position position="134"/>
    </location>
    <ligand>
        <name>Zn(2+)</name>
        <dbReference type="ChEBI" id="CHEBI:29105"/>
        <note>catalytic</note>
    </ligand>
</feature>
<feature type="binding site" evidence="5">
    <location>
        <position position="138"/>
    </location>
    <ligand>
        <name>Zn(2+)</name>
        <dbReference type="ChEBI" id="CHEBI:29105"/>
        <note>catalytic</note>
    </ligand>
</feature>
<feature type="binding site" evidence="5">
    <location>
        <position position="144"/>
    </location>
    <ligand>
        <name>Zn(2+)</name>
        <dbReference type="ChEBI" id="CHEBI:29105"/>
        <note>catalytic</note>
    </ligand>
</feature>
<feature type="glycosylation site" description="N-linked (GlcNAc...) asparagine" evidence="4">
    <location>
        <position position="52"/>
    </location>
</feature>
<feature type="glycosylation site" description="N-linked (GlcNAc...) asparagine" evidence="4">
    <location>
        <position position="61"/>
    </location>
</feature>
<feature type="glycosylation site" description="N-linked (GlcNAc...) asparagine" evidence="4">
    <location>
        <position position="371"/>
    </location>
</feature>
<feature type="disulfide bond" evidence="5">
    <location>
        <begin position="82"/>
        <end position="236"/>
    </location>
</feature>
<feature type="disulfide bond" evidence="5">
    <location>
        <begin position="106"/>
        <end position="126"/>
    </location>
</feature>
<feature type="disulfide bond" evidence="1">
    <location>
        <begin position="240"/>
        <end position="260"/>
    </location>
</feature>
<feature type="disulfide bond" evidence="1">
    <location>
        <begin position="265"/>
        <end position="274"/>
    </location>
</feature>
<protein>
    <recommendedName>
        <fullName>Zinc metalloproteinase nas-25</fullName>
        <ecNumber evidence="2">3.4.24.-</ecNumber>
    </recommendedName>
    <alternativeName>
        <fullName>Nematode astacin 25</fullName>
    </alternativeName>
</protein>
<name>NAS25_CAEEL</name>
<gene>
    <name type="primary">nas-25</name>
    <name type="ORF">F46C5.3</name>
</gene>
<proteinExistence type="evidence at transcript level"/>
<organism>
    <name type="scientific">Caenorhabditis elegans</name>
    <dbReference type="NCBI Taxonomy" id="6239"/>
    <lineage>
        <taxon>Eukaryota</taxon>
        <taxon>Metazoa</taxon>
        <taxon>Ecdysozoa</taxon>
        <taxon>Nematoda</taxon>
        <taxon>Chromadorea</taxon>
        <taxon>Rhabditida</taxon>
        <taxon>Rhabditina</taxon>
        <taxon>Rhabditomorpha</taxon>
        <taxon>Rhabditoidea</taxon>
        <taxon>Rhabditidae</taxon>
        <taxon>Peloderinae</taxon>
        <taxon>Caenorhabditis</taxon>
    </lineage>
</organism>
<accession>Q20459</accession>
<accession>Q7Z0M5</accession>
<sequence length="399" mass="45456">MQIYLGITICLVAFLTVIDCAIPYYRTHSNFGSLGRRKVRQVQRDLTYRWPNNTVPYYVGNVTSTIKKSVRLAIEELQAWTCIRFQNVNEKYSDGDSVRIVDLGSCSSPIGRQQIGTQDVSLTKNCWGMGTAIHELMHAIGIEHTQSRSDRNRYLDILAQNIDNRDLPNFELLSPRLWANLVPYDYGSVMHYSADSFSNKDDEQTMLPKDRSFIETMGSMIPNFYDFDQINQYYQCYDSCRNAGQLANCANGGIPNPNNCQVCNCPMGYGGDLCDQRPEGCGSTLVATDRWQKQKLSVRFSRNDDQYFTFCNSWIVGPSDRTLQVIYEITSDSIRRQICSFGCYEGGIEVKHLQDPRITNDRDCCLNTPLNLTTTVNPLPVILYTSGATVTYDFSYRYV</sequence>
<dbReference type="EC" id="3.4.24.-" evidence="2"/>
<dbReference type="EMBL" id="Z54281">
    <property type="protein sequence ID" value="CAA91045.3"/>
    <property type="molecule type" value="Genomic_DNA"/>
</dbReference>
<dbReference type="EMBL" id="AJ561215">
    <property type="protein sequence ID" value="CAD99216.1"/>
    <property type="molecule type" value="mRNA"/>
</dbReference>
<dbReference type="PIR" id="T22300">
    <property type="entry name" value="T22300"/>
</dbReference>
<dbReference type="RefSeq" id="NP_495880.1">
    <property type="nucleotide sequence ID" value="NM_063479.5"/>
</dbReference>
<dbReference type="SMR" id="Q20459"/>
<dbReference type="STRING" id="6239.F46C5.3.1"/>
<dbReference type="MEROPS" id="M12.A27"/>
<dbReference type="GlyCosmos" id="Q20459">
    <property type="glycosylation" value="3 sites, No reported glycans"/>
</dbReference>
<dbReference type="PaxDb" id="6239-F46C5.3"/>
<dbReference type="EnsemblMetazoa" id="F46C5.3.1">
    <property type="protein sequence ID" value="F46C5.3.1"/>
    <property type="gene ID" value="WBGene00003544"/>
</dbReference>
<dbReference type="GeneID" id="174412"/>
<dbReference type="KEGG" id="cel:CELE_F46C5.3"/>
<dbReference type="UCSC" id="F46C5.3">
    <property type="organism name" value="c. elegans"/>
</dbReference>
<dbReference type="AGR" id="WB:WBGene00003544"/>
<dbReference type="CTD" id="174412"/>
<dbReference type="WormBase" id="F46C5.3">
    <property type="protein sequence ID" value="CE28935"/>
    <property type="gene ID" value="WBGene00003544"/>
    <property type="gene designation" value="nas-25"/>
</dbReference>
<dbReference type="eggNOG" id="KOG3714">
    <property type="taxonomic scope" value="Eukaryota"/>
</dbReference>
<dbReference type="HOGENOM" id="CLU_017286_1_1_1"/>
<dbReference type="InParanoid" id="Q20459"/>
<dbReference type="OMA" id="VMHYSAD"/>
<dbReference type="OrthoDB" id="5786116at2759"/>
<dbReference type="PhylomeDB" id="Q20459"/>
<dbReference type="PRO" id="PR:Q20459"/>
<dbReference type="Proteomes" id="UP000001940">
    <property type="component" value="Chromosome II"/>
</dbReference>
<dbReference type="Bgee" id="WBGene00003544">
    <property type="expression patterns" value="Expressed in larva and 1 other cell type or tissue"/>
</dbReference>
<dbReference type="GO" id="GO:0005576">
    <property type="term" value="C:extracellular region"/>
    <property type="evidence" value="ECO:0007669"/>
    <property type="project" value="UniProtKB-SubCell"/>
</dbReference>
<dbReference type="GO" id="GO:0004222">
    <property type="term" value="F:metalloendopeptidase activity"/>
    <property type="evidence" value="ECO:0000318"/>
    <property type="project" value="GO_Central"/>
</dbReference>
<dbReference type="GO" id="GO:0008270">
    <property type="term" value="F:zinc ion binding"/>
    <property type="evidence" value="ECO:0007669"/>
    <property type="project" value="InterPro"/>
</dbReference>
<dbReference type="GO" id="GO:0018996">
    <property type="term" value="P:molting cycle, collagen and cuticulin-based cuticle"/>
    <property type="evidence" value="ECO:0007669"/>
    <property type="project" value="InterPro"/>
</dbReference>
<dbReference type="GO" id="GO:0006508">
    <property type="term" value="P:proteolysis"/>
    <property type="evidence" value="ECO:0007669"/>
    <property type="project" value="UniProtKB-KW"/>
</dbReference>
<dbReference type="CDD" id="cd04280">
    <property type="entry name" value="ZnMc_astacin_like"/>
    <property type="match status" value="1"/>
</dbReference>
<dbReference type="FunFam" id="3.40.390.10:FF:000071">
    <property type="entry name" value="Zinc metalloproteinase"/>
    <property type="match status" value="1"/>
</dbReference>
<dbReference type="Gene3D" id="3.40.390.10">
    <property type="entry name" value="Collagenase (Catalytic Domain)"/>
    <property type="match status" value="1"/>
</dbReference>
<dbReference type="InterPro" id="IPR034035">
    <property type="entry name" value="Astacin-like_dom"/>
</dbReference>
<dbReference type="InterPro" id="IPR024079">
    <property type="entry name" value="MetalloPept_cat_dom_sf"/>
</dbReference>
<dbReference type="InterPro" id="IPR017050">
    <property type="entry name" value="Metallopeptidase_nem"/>
</dbReference>
<dbReference type="InterPro" id="IPR001506">
    <property type="entry name" value="Peptidase_M12A"/>
</dbReference>
<dbReference type="InterPro" id="IPR006026">
    <property type="entry name" value="Peptidase_Metallo"/>
</dbReference>
<dbReference type="PANTHER" id="PTHR10127">
    <property type="entry name" value="DISCOIDIN, CUB, EGF, LAMININ , AND ZINC METALLOPROTEASE DOMAIN CONTAINING"/>
    <property type="match status" value="1"/>
</dbReference>
<dbReference type="PANTHER" id="PTHR10127:SF826">
    <property type="entry name" value="ZINC METALLOPROTEINASE NAS-25"/>
    <property type="match status" value="1"/>
</dbReference>
<dbReference type="Pfam" id="PF01400">
    <property type="entry name" value="Astacin"/>
    <property type="match status" value="1"/>
</dbReference>
<dbReference type="PIRSF" id="PIRSF036365">
    <property type="entry name" value="Astacin_nematoda"/>
    <property type="match status" value="1"/>
</dbReference>
<dbReference type="PRINTS" id="PR00480">
    <property type="entry name" value="ASTACIN"/>
</dbReference>
<dbReference type="SMART" id="SM00235">
    <property type="entry name" value="ZnMc"/>
    <property type="match status" value="1"/>
</dbReference>
<dbReference type="SUPFAM" id="SSF55486">
    <property type="entry name" value="Metalloproteases ('zincins'), catalytic domain"/>
    <property type="match status" value="1"/>
</dbReference>
<dbReference type="PROSITE" id="PS51864">
    <property type="entry name" value="ASTACIN"/>
    <property type="match status" value="1"/>
</dbReference>
<dbReference type="PROSITE" id="PS00022">
    <property type="entry name" value="EGF_1"/>
    <property type="match status" value="1"/>
</dbReference>
<dbReference type="PROSITE" id="PS01186">
    <property type="entry name" value="EGF_2"/>
    <property type="match status" value="1"/>
</dbReference>
<dbReference type="PROSITE" id="PS00142">
    <property type="entry name" value="ZINC_PROTEASE"/>
    <property type="match status" value="1"/>
</dbReference>
<evidence type="ECO:0000250" key="1"/>
<evidence type="ECO:0000250" key="2">
    <source>
        <dbReference type="UniProtKB" id="A8Q2D1"/>
    </source>
</evidence>
<evidence type="ECO:0000250" key="3">
    <source>
        <dbReference type="UniProtKB" id="P07584"/>
    </source>
</evidence>
<evidence type="ECO:0000255" key="4"/>
<evidence type="ECO:0000255" key="5">
    <source>
        <dbReference type="PROSITE-ProRule" id="PRU01211"/>
    </source>
</evidence>
<evidence type="ECO:0000269" key="6">
    <source>
    </source>
</evidence>
<evidence type="ECO:0000305" key="7"/>